<name>PG47_MYCTU</name>
<gene>
    <name evidence="5" type="primary">PE_PGRS47</name>
    <name evidence="5" type="ordered locus">Rv2741</name>
</gene>
<protein>
    <recommendedName>
        <fullName evidence="4">PE-PGRS family protein PE_PGRS47</fullName>
    </recommendedName>
</protein>
<dbReference type="EMBL" id="AL123456">
    <property type="protein sequence ID" value="CCP45540.1"/>
    <property type="molecule type" value="Genomic_DNA"/>
</dbReference>
<dbReference type="RefSeq" id="WP_010886154.1">
    <property type="nucleotide sequence ID" value="NC_000962.3"/>
</dbReference>
<dbReference type="RefSeq" id="YP_177902.1">
    <property type="nucleotide sequence ID" value="NC_000962.3"/>
</dbReference>
<dbReference type="STRING" id="83332.Rv2741"/>
<dbReference type="PaxDb" id="83332-Rv2741"/>
<dbReference type="GeneID" id="888339"/>
<dbReference type="KEGG" id="mtu:Rv2741"/>
<dbReference type="PATRIC" id="fig|83332.12.peg.3054"/>
<dbReference type="TubercuList" id="Rv2741"/>
<dbReference type="eggNOG" id="COG3391">
    <property type="taxonomic scope" value="Bacteria"/>
</dbReference>
<dbReference type="InParanoid" id="Q79FB3"/>
<dbReference type="OrthoDB" id="4752513at2"/>
<dbReference type="Proteomes" id="UP000001584">
    <property type="component" value="Chromosome"/>
</dbReference>
<dbReference type="GO" id="GO:0009986">
    <property type="term" value="C:cell surface"/>
    <property type="evidence" value="ECO:0007669"/>
    <property type="project" value="UniProtKB-SubCell"/>
</dbReference>
<dbReference type="GO" id="GO:0005576">
    <property type="term" value="C:extracellular region"/>
    <property type="evidence" value="ECO:0007669"/>
    <property type="project" value="UniProtKB-SubCell"/>
</dbReference>
<dbReference type="GO" id="GO:0044164">
    <property type="term" value="C:host cell cytosol"/>
    <property type="evidence" value="ECO:0007669"/>
    <property type="project" value="UniProtKB-SubCell"/>
</dbReference>
<dbReference type="Gene3D" id="1.10.287.850">
    <property type="entry name" value="HP0062-like domain"/>
    <property type="match status" value="1"/>
</dbReference>
<dbReference type="InterPro" id="IPR000084">
    <property type="entry name" value="PE-PGRS_N"/>
</dbReference>
<dbReference type="InterPro" id="IPR048996">
    <property type="entry name" value="PGRS_rpt"/>
</dbReference>
<dbReference type="Pfam" id="PF00934">
    <property type="entry name" value="PE"/>
    <property type="match status" value="1"/>
</dbReference>
<dbReference type="Pfam" id="PF21526">
    <property type="entry name" value="PGRS"/>
    <property type="match status" value="1"/>
</dbReference>
<dbReference type="PRINTS" id="PR01228">
    <property type="entry name" value="EGGSHELL"/>
</dbReference>
<dbReference type="SUPFAM" id="SSF140459">
    <property type="entry name" value="PE/PPE dimer-like"/>
    <property type="match status" value="1"/>
</dbReference>
<comment type="function">
    <text evidence="3">Contributes to evasion of both innate and adaptive immunity. Inhibits autophagy in infected host phagocytes and inhibits major histocompatibility complex (MHC) class II antigen presentation by mycobacteria-infected dendritic cells. Has an important role in the growth and survival of M.tuberculosis, particularly during intracellular growth and in the later chronic phase of infection.</text>
</comment>
<comment type="subcellular location">
    <subcellularLocation>
        <location evidence="3">Secreted</location>
    </subcellularLocation>
    <subcellularLocation>
        <location evidence="3">Cell surface</location>
    </subcellularLocation>
    <subcellularLocation>
        <location evidence="3">Host cytoplasm</location>
        <location evidence="3">Host cytosol</location>
    </subcellularLocation>
    <text evidence="3">Loosely attached to the cell surface, with the potential to detach during growth within infected cells.</text>
</comment>
<comment type="disruption phenotype">
    <text evidence="3">Deletion mutant is attenuated in vitro and in vivo, and shows enhanced MHC class II-restricted antigen presentation during in vivo infection of mice. Also shows a reduced capability to inhibit autophagy and an increased acidification and lysosomal fusion of phagosomes during infection of phagocytic cells.</text>
</comment>
<comment type="similarity">
    <text evidence="4">Belongs to the mycobacterial PE family. PGRS subfamily.</text>
</comment>
<evidence type="ECO:0000255" key="1"/>
<evidence type="ECO:0000256" key="2">
    <source>
        <dbReference type="SAM" id="MobiDB-lite"/>
    </source>
</evidence>
<evidence type="ECO:0000269" key="3">
    <source>
    </source>
</evidence>
<evidence type="ECO:0000305" key="4"/>
<evidence type="ECO:0000312" key="5">
    <source>
        <dbReference type="EMBL" id="CCP45540.1"/>
    </source>
</evidence>
<accession>Q79FB3</accession>
<organism>
    <name type="scientific">Mycobacterium tuberculosis (strain ATCC 25618 / H37Rv)</name>
    <dbReference type="NCBI Taxonomy" id="83332"/>
    <lineage>
        <taxon>Bacteria</taxon>
        <taxon>Bacillati</taxon>
        <taxon>Actinomycetota</taxon>
        <taxon>Actinomycetes</taxon>
        <taxon>Mycobacteriales</taxon>
        <taxon>Mycobacteriaceae</taxon>
        <taxon>Mycobacterium</taxon>
        <taxon>Mycobacterium tuberculosis complex</taxon>
    </lineage>
</organism>
<reference key="1">
    <citation type="journal article" date="1998" name="Nature">
        <title>Deciphering the biology of Mycobacterium tuberculosis from the complete genome sequence.</title>
        <authorList>
            <person name="Cole S.T."/>
            <person name="Brosch R."/>
            <person name="Parkhill J."/>
            <person name="Garnier T."/>
            <person name="Churcher C.M."/>
            <person name="Harris D.E."/>
            <person name="Gordon S.V."/>
            <person name="Eiglmeier K."/>
            <person name="Gas S."/>
            <person name="Barry C.E. III"/>
            <person name="Tekaia F."/>
            <person name="Badcock K."/>
            <person name="Basham D."/>
            <person name="Brown D."/>
            <person name="Chillingworth T."/>
            <person name="Connor R."/>
            <person name="Davies R.M."/>
            <person name="Devlin K."/>
            <person name="Feltwell T."/>
            <person name="Gentles S."/>
            <person name="Hamlin N."/>
            <person name="Holroyd S."/>
            <person name="Hornsby T."/>
            <person name="Jagels K."/>
            <person name="Krogh A."/>
            <person name="McLean J."/>
            <person name="Moule S."/>
            <person name="Murphy L.D."/>
            <person name="Oliver S."/>
            <person name="Osborne J."/>
            <person name="Quail M.A."/>
            <person name="Rajandream M.A."/>
            <person name="Rogers J."/>
            <person name="Rutter S."/>
            <person name="Seeger K."/>
            <person name="Skelton S."/>
            <person name="Squares S."/>
            <person name="Squares R."/>
            <person name="Sulston J.E."/>
            <person name="Taylor K."/>
            <person name="Whitehead S."/>
            <person name="Barrell B.G."/>
        </authorList>
    </citation>
    <scope>NUCLEOTIDE SEQUENCE [LARGE SCALE GENOMIC DNA]</scope>
    <source>
        <strain>ATCC 25618 / H37Rv</strain>
    </source>
</reference>
<reference key="2">
    <citation type="journal article" date="2016" name="Nat. Microbiol.">
        <title>Suppression of autophagy and antigen presentation by Mycobacterium tuberculosis PE_PGRS47.</title>
        <authorList>
            <person name="Saini N.K."/>
            <person name="Baena A."/>
            <person name="Ng T.W."/>
            <person name="Venkataswamy M.M."/>
            <person name="Kennedy S.C."/>
            <person name="Kunnath-Velayudhan S."/>
            <person name="Carreno L.J."/>
            <person name="Xu J."/>
            <person name="Chan J."/>
            <person name="Larsen M.H."/>
            <person name="Jacobs W.R. Jr."/>
            <person name="Porcelli S.A."/>
        </authorList>
    </citation>
    <scope>FUNCTION</scope>
    <scope>SUBCELLULAR LOCATION</scope>
    <scope>DISRUPTION PHENOTYPE</scope>
</reference>
<proteinExistence type="inferred from homology"/>
<keyword id="KW-1035">Host cytoplasm</keyword>
<keyword id="KW-1185">Reference proteome</keyword>
<keyword id="KW-0964">Secreted</keyword>
<keyword id="KW-0843">Virulence</keyword>
<feature type="chain" id="PRO_5004287628" description="PE-PGRS family protein PE_PGRS47">
    <location>
        <begin position="1"/>
        <end position="525"/>
    </location>
</feature>
<feature type="domain" description="PE" evidence="1">
    <location>
        <begin position="1"/>
        <end position="93"/>
    </location>
</feature>
<feature type="region of interest" description="Disordered" evidence="2">
    <location>
        <begin position="506"/>
        <end position="525"/>
    </location>
</feature>
<feature type="compositionally biased region" description="Low complexity" evidence="2">
    <location>
        <begin position="514"/>
        <end position="525"/>
    </location>
</feature>
<sequence>MSFVIAAPEFLTAAAMDLASIGSTVSAASAAASAPTVAILAAGADEVSIAVAALFGMHGQAYQALSVQASAFHQQFVQALTAGAYSYASAEAAAVTPLQQLVDVINAPFRSALGRPLIGNGANGKPGTGQDGGAGGLLYGSGGNGGSGLAGSGQKGGNGGAAGLFGNGGAGGAGASNQAGNGGAGGNGGAGGLIWGTAGTGGNGGFTTFLDAAGGAGGAGGAGGLFGAGGAGGVGGAALGGGAQAAGGNGGAGGVGGLFGAGGAGGAGGFSDTGGTGGAGGAGGLFGPGGGSGGVGGFGDTGGTGGDGGSGGLFGVGGAGGHGGFGSAAGGDGGAGGAGGTVFGSGGAGGAGGVATVAGHGGHGGNAGLLYGTGGAGGAGGFGGFGGDGGDGGIGGLVGSGGAGGSGGTGTLSGGRGGAGGNAGTFYGSGGAGGAGGESDNGDGGNGGVGGKAGLVGEGGNGGDGGATIAGKGGSGGNGGNAWLTGQGGNGGNAAFGKAGTGSVGVGGAGGLLEGQNGENGLLPS</sequence>